<feature type="propeptide" id="PRO_0000431148" evidence="1">
    <location>
        <begin position="1"/>
        <end position="14"/>
    </location>
</feature>
<feature type="chain" id="PRO_0000361389" description="Photosystem II CP43 reaction center protein" evidence="1">
    <location>
        <begin position="15"/>
        <end position="473"/>
    </location>
</feature>
<feature type="transmembrane region" description="Helical" evidence="1">
    <location>
        <begin position="69"/>
        <end position="93"/>
    </location>
</feature>
<feature type="transmembrane region" description="Helical" evidence="1">
    <location>
        <begin position="134"/>
        <end position="155"/>
    </location>
</feature>
<feature type="transmembrane region" description="Helical" evidence="1">
    <location>
        <begin position="178"/>
        <end position="200"/>
    </location>
</feature>
<feature type="transmembrane region" description="Helical" evidence="1">
    <location>
        <begin position="255"/>
        <end position="275"/>
    </location>
</feature>
<feature type="transmembrane region" description="Helical" evidence="1">
    <location>
        <begin position="291"/>
        <end position="312"/>
    </location>
</feature>
<feature type="transmembrane region" description="Helical" evidence="1">
    <location>
        <begin position="447"/>
        <end position="471"/>
    </location>
</feature>
<feature type="binding site" evidence="1">
    <location>
        <position position="367"/>
    </location>
    <ligand>
        <name>[CaMn4O5] cluster</name>
        <dbReference type="ChEBI" id="CHEBI:189552"/>
    </ligand>
</feature>
<feature type="modified residue" description="N-acetylthreonine" evidence="1">
    <location>
        <position position="15"/>
    </location>
</feature>
<feature type="modified residue" description="Phosphothreonine" evidence="1">
    <location>
        <position position="15"/>
    </location>
</feature>
<name>PSBC_GOSHI</name>
<protein>
    <recommendedName>
        <fullName evidence="1">Photosystem II CP43 reaction center protein</fullName>
    </recommendedName>
    <alternativeName>
        <fullName evidence="1">PSII 43 kDa protein</fullName>
    </alternativeName>
    <alternativeName>
        <fullName evidence="1">Protein CP-43</fullName>
    </alternativeName>
</protein>
<evidence type="ECO:0000255" key="1">
    <source>
        <dbReference type="HAMAP-Rule" id="MF_01496"/>
    </source>
</evidence>
<keyword id="KW-0007">Acetylation</keyword>
<keyword id="KW-0148">Chlorophyll</keyword>
<keyword id="KW-0150">Chloroplast</keyword>
<keyword id="KW-0157">Chromophore</keyword>
<keyword id="KW-0464">Manganese</keyword>
<keyword id="KW-0472">Membrane</keyword>
<keyword id="KW-0479">Metal-binding</keyword>
<keyword id="KW-0597">Phosphoprotein</keyword>
<keyword id="KW-0602">Photosynthesis</keyword>
<keyword id="KW-0604">Photosystem II</keyword>
<keyword id="KW-0934">Plastid</keyword>
<keyword id="KW-1185">Reference proteome</keyword>
<keyword id="KW-0793">Thylakoid</keyword>
<keyword id="KW-0812">Transmembrane</keyword>
<keyword id="KW-1133">Transmembrane helix</keyword>
<geneLocation type="chloroplast"/>
<organism>
    <name type="scientific">Gossypium hirsutum</name>
    <name type="common">Upland cotton</name>
    <name type="synonym">Gossypium mexicanum</name>
    <dbReference type="NCBI Taxonomy" id="3635"/>
    <lineage>
        <taxon>Eukaryota</taxon>
        <taxon>Viridiplantae</taxon>
        <taxon>Streptophyta</taxon>
        <taxon>Embryophyta</taxon>
        <taxon>Tracheophyta</taxon>
        <taxon>Spermatophyta</taxon>
        <taxon>Magnoliopsida</taxon>
        <taxon>eudicotyledons</taxon>
        <taxon>Gunneridae</taxon>
        <taxon>Pentapetalae</taxon>
        <taxon>rosids</taxon>
        <taxon>malvids</taxon>
        <taxon>Malvales</taxon>
        <taxon>Malvaceae</taxon>
        <taxon>Malvoideae</taxon>
        <taxon>Gossypium</taxon>
    </lineage>
</organism>
<sequence>MKTLYSLRRFYPVETLFNGTLALAGRDQETTGFAWWAGNARLINLSGKLLGAHVAHAGLIVFWAGAMNLFEVAHFVPEKPMYEQGLILLPHLATLGWGVGPGGEVIDTFPYFVSGVLHLISSAVLGFGGIYHALLGPETLEESFPFFGYVWKDRNKMTTILGIHLILLGIGAFLLVFKALYFGGVYDTWAPGGGDVRKITNLTLSPSVIFGYLLKSPFGGEGWIVSVDDLEDIIGGHVWLGSICIFGGIWHILTKPFAWARRALVWSGEAYLSYSLGALSVFGFIACCFVWFNNTAYPSEFYGPTGPEASQAQAFTFLVRDQRLGANVGSAQGPTGLGKYLMRSPTGEVIFGGETMRFWDLRAPWLEPLRGPNGLDLSRLKKDIQPWQERRSAEYMTHAPLGSLNSVGGVATEINAVNYVSPRSWLATSHFVLGFFLFVGHLWHAGRARAAAAGFEKGIDRDFEPVLSMTPLN</sequence>
<comment type="function">
    <text evidence="1">One of the components of the core complex of photosystem II (PSII). It binds chlorophyll and helps catalyze the primary light-induced photochemical processes of PSII. PSII is a light-driven water:plastoquinone oxidoreductase, using light energy to abstract electrons from H(2)O, generating O(2) and a proton gradient subsequently used for ATP formation.</text>
</comment>
<comment type="cofactor">
    <text evidence="1">Binds multiple chlorophylls and provides some of the ligands for the Ca-4Mn-5O cluster of the oxygen-evolving complex. It may also provide a ligand for a Cl- that is required for oxygen evolution. PSII binds additional chlorophylls, carotenoids and specific lipids.</text>
</comment>
<comment type="subunit">
    <text evidence="1">PSII is composed of 1 copy each of membrane proteins PsbA, PsbB, PsbC, PsbD, PsbE, PsbF, PsbH, PsbI, PsbJ, PsbK, PsbL, PsbM, PsbT, PsbX, PsbY, PsbZ, Psb30/Ycf12, at least 3 peripheral proteins of the oxygen-evolving complex and a large number of cofactors. It forms dimeric complexes.</text>
</comment>
<comment type="subcellular location">
    <subcellularLocation>
        <location evidence="1">Plastid</location>
        <location evidence="1">Chloroplast thylakoid membrane</location>
        <topology evidence="1">Multi-pass membrane protein</topology>
    </subcellularLocation>
</comment>
<comment type="similarity">
    <text evidence="1">Belongs to the PsbB/PsbC family. PsbC subfamily.</text>
</comment>
<dbReference type="EMBL" id="DQ345959">
    <property type="protein sequence ID" value="ABC73624.1"/>
    <property type="molecule type" value="Genomic_DNA"/>
</dbReference>
<dbReference type="RefSeq" id="YP_538931.1">
    <property type="nucleotide sequence ID" value="NC_007944.1"/>
</dbReference>
<dbReference type="SMR" id="Q2L901"/>
<dbReference type="GeneID" id="3989206"/>
<dbReference type="KEGG" id="ghi:3989206"/>
<dbReference type="OrthoDB" id="64780at41938"/>
<dbReference type="Proteomes" id="UP000189702">
    <property type="component" value="Chloroplast Pltd"/>
</dbReference>
<dbReference type="GO" id="GO:0009535">
    <property type="term" value="C:chloroplast thylakoid membrane"/>
    <property type="evidence" value="ECO:0007669"/>
    <property type="project" value="UniProtKB-SubCell"/>
</dbReference>
<dbReference type="GO" id="GO:0009523">
    <property type="term" value="C:photosystem II"/>
    <property type="evidence" value="ECO:0007669"/>
    <property type="project" value="UniProtKB-KW"/>
</dbReference>
<dbReference type="GO" id="GO:0016168">
    <property type="term" value="F:chlorophyll binding"/>
    <property type="evidence" value="ECO:0007669"/>
    <property type="project" value="UniProtKB-UniRule"/>
</dbReference>
<dbReference type="GO" id="GO:0045156">
    <property type="term" value="F:electron transporter, transferring electrons within the cyclic electron transport pathway of photosynthesis activity"/>
    <property type="evidence" value="ECO:0007669"/>
    <property type="project" value="InterPro"/>
</dbReference>
<dbReference type="GO" id="GO:0046872">
    <property type="term" value="F:metal ion binding"/>
    <property type="evidence" value="ECO:0007669"/>
    <property type="project" value="UniProtKB-KW"/>
</dbReference>
<dbReference type="GO" id="GO:0009772">
    <property type="term" value="P:photosynthetic electron transport in photosystem II"/>
    <property type="evidence" value="ECO:0007669"/>
    <property type="project" value="InterPro"/>
</dbReference>
<dbReference type="FunFam" id="1.10.10.670:FF:000001">
    <property type="entry name" value="Photosystem II CP43 reaction center protein"/>
    <property type="match status" value="1"/>
</dbReference>
<dbReference type="Gene3D" id="1.10.10.670">
    <property type="entry name" value="photosystem ii from thermosynechococcus elongatus"/>
    <property type="match status" value="1"/>
</dbReference>
<dbReference type="HAMAP" id="MF_01496">
    <property type="entry name" value="PSII_PsbC_CP43"/>
    <property type="match status" value="1"/>
</dbReference>
<dbReference type="InterPro" id="IPR000932">
    <property type="entry name" value="PS_antenna-like"/>
</dbReference>
<dbReference type="InterPro" id="IPR036001">
    <property type="entry name" value="PS_II_antenna-like_sf"/>
</dbReference>
<dbReference type="InterPro" id="IPR005869">
    <property type="entry name" value="PSII_PsbC"/>
</dbReference>
<dbReference type="InterPro" id="IPR044900">
    <property type="entry name" value="PSII_PsbC_sf"/>
</dbReference>
<dbReference type="NCBIfam" id="TIGR01153">
    <property type="entry name" value="psbC"/>
    <property type="match status" value="1"/>
</dbReference>
<dbReference type="Pfam" id="PF00421">
    <property type="entry name" value="PSII"/>
    <property type="match status" value="1"/>
</dbReference>
<dbReference type="SUPFAM" id="SSF161077">
    <property type="entry name" value="Photosystem II antenna protein-like"/>
    <property type="match status" value="1"/>
</dbReference>
<accession>Q2L901</accession>
<gene>
    <name evidence="1" type="primary">psbC</name>
</gene>
<proteinExistence type="inferred from homology"/>
<reference key="1">
    <citation type="journal article" date="2006" name="BMC Genomics">
        <title>The complete chloroplast genome sequence of Gossypium hirsutum: organization and phylogenetic relationships to other angiosperms.</title>
        <authorList>
            <person name="Lee S.-B."/>
            <person name="Kaittanis C."/>
            <person name="Jansen R.K."/>
            <person name="Hostetler J.B."/>
            <person name="Tallon L.J."/>
            <person name="Town C.D."/>
            <person name="Daniell H."/>
        </authorList>
    </citation>
    <scope>NUCLEOTIDE SEQUENCE [LARGE SCALE GENOMIC DNA]</scope>
    <source>
        <strain>cv. Coker 310FR</strain>
    </source>
</reference>